<feature type="chain" id="PRO_1000142400" description="Large ribosomal subunit protein uL5">
    <location>
        <begin position="1"/>
        <end position="179"/>
    </location>
</feature>
<feature type="modified residue" description="N6-acetyllysine" evidence="1">
    <location>
        <position position="3"/>
    </location>
</feature>
<reference key="1">
    <citation type="journal article" date="2008" name="J. Bacteriol.">
        <title>Insights into the environmental resistance gene pool from the genome sequence of the multidrug-resistant environmental isolate Escherichia coli SMS-3-5.</title>
        <authorList>
            <person name="Fricke W.F."/>
            <person name="Wright M.S."/>
            <person name="Lindell A.H."/>
            <person name="Harkins D.M."/>
            <person name="Baker-Austin C."/>
            <person name="Ravel J."/>
            <person name="Stepanauskas R."/>
        </authorList>
    </citation>
    <scope>NUCLEOTIDE SEQUENCE [LARGE SCALE GENOMIC DNA]</scope>
    <source>
        <strain>SMS-3-5 / SECEC</strain>
    </source>
</reference>
<dbReference type="EMBL" id="CP000970">
    <property type="protein sequence ID" value="ACB19531.1"/>
    <property type="molecule type" value="Genomic_DNA"/>
</dbReference>
<dbReference type="RefSeq" id="WP_001096200.1">
    <property type="nucleotide sequence ID" value="NC_010498.1"/>
</dbReference>
<dbReference type="SMR" id="B1LHC2"/>
<dbReference type="GeneID" id="93778679"/>
<dbReference type="KEGG" id="ecm:EcSMS35_3603"/>
<dbReference type="HOGENOM" id="CLU_061015_2_1_6"/>
<dbReference type="Proteomes" id="UP000007011">
    <property type="component" value="Chromosome"/>
</dbReference>
<dbReference type="GO" id="GO:1990904">
    <property type="term" value="C:ribonucleoprotein complex"/>
    <property type="evidence" value="ECO:0007669"/>
    <property type="project" value="UniProtKB-KW"/>
</dbReference>
<dbReference type="GO" id="GO:0005840">
    <property type="term" value="C:ribosome"/>
    <property type="evidence" value="ECO:0007669"/>
    <property type="project" value="UniProtKB-KW"/>
</dbReference>
<dbReference type="GO" id="GO:0019843">
    <property type="term" value="F:rRNA binding"/>
    <property type="evidence" value="ECO:0007669"/>
    <property type="project" value="UniProtKB-UniRule"/>
</dbReference>
<dbReference type="GO" id="GO:0003735">
    <property type="term" value="F:structural constituent of ribosome"/>
    <property type="evidence" value="ECO:0007669"/>
    <property type="project" value="InterPro"/>
</dbReference>
<dbReference type="GO" id="GO:0000049">
    <property type="term" value="F:tRNA binding"/>
    <property type="evidence" value="ECO:0007669"/>
    <property type="project" value="UniProtKB-UniRule"/>
</dbReference>
<dbReference type="GO" id="GO:0006412">
    <property type="term" value="P:translation"/>
    <property type="evidence" value="ECO:0007669"/>
    <property type="project" value="UniProtKB-UniRule"/>
</dbReference>
<dbReference type="FunFam" id="3.30.1440.10:FF:000001">
    <property type="entry name" value="50S ribosomal protein L5"/>
    <property type="match status" value="1"/>
</dbReference>
<dbReference type="Gene3D" id="3.30.1440.10">
    <property type="match status" value="1"/>
</dbReference>
<dbReference type="HAMAP" id="MF_01333_B">
    <property type="entry name" value="Ribosomal_uL5_B"/>
    <property type="match status" value="1"/>
</dbReference>
<dbReference type="InterPro" id="IPR002132">
    <property type="entry name" value="Ribosomal_uL5"/>
</dbReference>
<dbReference type="InterPro" id="IPR020930">
    <property type="entry name" value="Ribosomal_uL5_bac-type"/>
</dbReference>
<dbReference type="InterPro" id="IPR031309">
    <property type="entry name" value="Ribosomal_uL5_C"/>
</dbReference>
<dbReference type="InterPro" id="IPR020929">
    <property type="entry name" value="Ribosomal_uL5_CS"/>
</dbReference>
<dbReference type="InterPro" id="IPR022803">
    <property type="entry name" value="Ribosomal_uL5_dom_sf"/>
</dbReference>
<dbReference type="InterPro" id="IPR031310">
    <property type="entry name" value="Ribosomal_uL5_N"/>
</dbReference>
<dbReference type="NCBIfam" id="NF000585">
    <property type="entry name" value="PRK00010.1"/>
    <property type="match status" value="1"/>
</dbReference>
<dbReference type="PANTHER" id="PTHR11994">
    <property type="entry name" value="60S RIBOSOMAL PROTEIN L11-RELATED"/>
    <property type="match status" value="1"/>
</dbReference>
<dbReference type="Pfam" id="PF00281">
    <property type="entry name" value="Ribosomal_L5"/>
    <property type="match status" value="1"/>
</dbReference>
<dbReference type="Pfam" id="PF00673">
    <property type="entry name" value="Ribosomal_L5_C"/>
    <property type="match status" value="1"/>
</dbReference>
<dbReference type="PIRSF" id="PIRSF002161">
    <property type="entry name" value="Ribosomal_L5"/>
    <property type="match status" value="1"/>
</dbReference>
<dbReference type="SUPFAM" id="SSF55282">
    <property type="entry name" value="RL5-like"/>
    <property type="match status" value="1"/>
</dbReference>
<dbReference type="PROSITE" id="PS00358">
    <property type="entry name" value="RIBOSOMAL_L5"/>
    <property type="match status" value="1"/>
</dbReference>
<accession>B1LHC2</accession>
<keyword id="KW-0007">Acetylation</keyword>
<keyword id="KW-0687">Ribonucleoprotein</keyword>
<keyword id="KW-0689">Ribosomal protein</keyword>
<keyword id="KW-0694">RNA-binding</keyword>
<keyword id="KW-0699">rRNA-binding</keyword>
<keyword id="KW-0820">tRNA-binding</keyword>
<organism>
    <name type="scientific">Escherichia coli (strain SMS-3-5 / SECEC)</name>
    <dbReference type="NCBI Taxonomy" id="439855"/>
    <lineage>
        <taxon>Bacteria</taxon>
        <taxon>Pseudomonadati</taxon>
        <taxon>Pseudomonadota</taxon>
        <taxon>Gammaproteobacteria</taxon>
        <taxon>Enterobacterales</taxon>
        <taxon>Enterobacteriaceae</taxon>
        <taxon>Escherichia</taxon>
    </lineage>
</organism>
<comment type="function">
    <text evidence="1">This is one of the proteins that bind and probably mediate the attachment of the 5S RNA into the large ribosomal subunit, where it forms part of the central protuberance. In the 70S ribosome it contacts protein S13 of the 30S subunit (bridge B1b), connecting the 2 subunits; this bridge is implicated in subunit movement. Contacts the P site tRNA; the 5S rRNA and some of its associated proteins might help stabilize positioning of ribosome-bound tRNAs.</text>
</comment>
<comment type="subunit">
    <text evidence="1">Part of the 50S ribosomal subunit; part of the 5S rRNA/L5/L18/L25 subcomplex. Contacts the 5S rRNA and the P site tRNA. Forms a bridge to the 30S subunit in the 70S ribosome.</text>
</comment>
<comment type="similarity">
    <text evidence="1">Belongs to the universal ribosomal protein uL5 family.</text>
</comment>
<evidence type="ECO:0000255" key="1">
    <source>
        <dbReference type="HAMAP-Rule" id="MF_01333"/>
    </source>
</evidence>
<evidence type="ECO:0000305" key="2"/>
<protein>
    <recommendedName>
        <fullName evidence="1">Large ribosomal subunit protein uL5</fullName>
    </recommendedName>
    <alternativeName>
        <fullName evidence="2">50S ribosomal protein L5</fullName>
    </alternativeName>
</protein>
<proteinExistence type="inferred from homology"/>
<gene>
    <name evidence="1" type="primary">rplE</name>
    <name type="ordered locus">EcSMS35_3603</name>
</gene>
<name>RL5_ECOSM</name>
<sequence length="179" mass="20302">MAKLHDYYKDEVVKKLMTEFNYNSVMQVPRVEKITLNMGVGEAIADKKLLDNAAADLAAISGQKPLITKARKSVAGFKIRQGYPIGCKVTLRGERMWEFFERLITIAVPRIRDFRGLSAKSFDGRGNYSMGVREQIIFPEIDYDKVDRVRGLDITITTTAKSDEEGRALLAAFDFPFRK</sequence>